<accession>B3PDM5</accession>
<protein>
    <recommendedName>
        <fullName evidence="1">GTPase Der</fullName>
    </recommendedName>
    <alternativeName>
        <fullName evidence="1">GTP-binding protein EngA</fullName>
    </alternativeName>
</protein>
<evidence type="ECO:0000255" key="1">
    <source>
        <dbReference type="HAMAP-Rule" id="MF_00195"/>
    </source>
</evidence>
<evidence type="ECO:0000256" key="2">
    <source>
        <dbReference type="SAM" id="MobiDB-lite"/>
    </source>
</evidence>
<reference key="1">
    <citation type="journal article" date="2008" name="J. Bacteriol.">
        <title>Insights into plant cell wall degradation from the genome sequence of the soil bacterium Cellvibrio japonicus.</title>
        <authorList>
            <person name="DeBoy R.T."/>
            <person name="Mongodin E.F."/>
            <person name="Fouts D.E."/>
            <person name="Tailford L.E."/>
            <person name="Khouri H."/>
            <person name="Emerson J.B."/>
            <person name="Mohamoud Y."/>
            <person name="Watkins K."/>
            <person name="Henrissat B."/>
            <person name="Gilbert H.J."/>
            <person name="Nelson K.E."/>
        </authorList>
    </citation>
    <scope>NUCLEOTIDE SEQUENCE [LARGE SCALE GENOMIC DNA]</scope>
    <source>
        <strain>Ueda107</strain>
    </source>
</reference>
<name>DER_CELJU</name>
<sequence length="466" mass="52660">MIPVIALVGRPNVGKSTLFNRLTNSRDALVADYPGLTRDRKYGEARLENRRFIVIDTGGISGEEEGIDSAMAGQSLLAIQEADIVLFIVDSRVGLNPADELIARHLRVHNKKTYVVANKIDGMDPDIALAPFYELGMGEVHPTTATHGRGVRSLMEDVLAEYPEIPEEEQQGEATGIKIAIVGRPNVGKSTLVNRLLGEDRVVVYDQPGTTRDSIYINYTRFDKPYTLIDTAGVRRRKNIDLAVEKFSIVKTMQAIADANVVILVMDASEGIVEQDLHLMGTAIEAGRALVIALNKWDGLDESHKYYVKNELERRLRFVDFANIHFISALHGTGVGNLYKSIEQAYQSATDRFSTNYLTRILQDAVREHQPPMINGRRIKLRYAHPGGHNPPVIIVHGNQTDDVPGHYVKYLEKTYRRVLDLHGTPIRIEFRTTDNPYEARKKSMTRQQFIQKRRKEERDRNNPRR</sequence>
<feature type="chain" id="PRO_1000099100" description="GTPase Der">
    <location>
        <begin position="1"/>
        <end position="466"/>
    </location>
</feature>
<feature type="domain" description="EngA-type G 1">
    <location>
        <begin position="3"/>
        <end position="166"/>
    </location>
</feature>
<feature type="domain" description="EngA-type G 2">
    <location>
        <begin position="177"/>
        <end position="350"/>
    </location>
</feature>
<feature type="domain" description="KH-like" evidence="1">
    <location>
        <begin position="351"/>
        <end position="435"/>
    </location>
</feature>
<feature type="region of interest" description="Disordered" evidence="2">
    <location>
        <begin position="442"/>
        <end position="466"/>
    </location>
</feature>
<feature type="compositionally biased region" description="Basic and acidic residues" evidence="2">
    <location>
        <begin position="455"/>
        <end position="466"/>
    </location>
</feature>
<feature type="binding site" evidence="1">
    <location>
        <begin position="9"/>
        <end position="16"/>
    </location>
    <ligand>
        <name>GTP</name>
        <dbReference type="ChEBI" id="CHEBI:37565"/>
        <label>1</label>
    </ligand>
</feature>
<feature type="binding site" evidence="1">
    <location>
        <begin position="56"/>
        <end position="60"/>
    </location>
    <ligand>
        <name>GTP</name>
        <dbReference type="ChEBI" id="CHEBI:37565"/>
        <label>1</label>
    </ligand>
</feature>
<feature type="binding site" evidence="1">
    <location>
        <begin position="118"/>
        <end position="121"/>
    </location>
    <ligand>
        <name>GTP</name>
        <dbReference type="ChEBI" id="CHEBI:37565"/>
        <label>1</label>
    </ligand>
</feature>
<feature type="binding site" evidence="1">
    <location>
        <begin position="183"/>
        <end position="190"/>
    </location>
    <ligand>
        <name>GTP</name>
        <dbReference type="ChEBI" id="CHEBI:37565"/>
        <label>2</label>
    </ligand>
</feature>
<feature type="binding site" evidence="1">
    <location>
        <begin position="230"/>
        <end position="234"/>
    </location>
    <ligand>
        <name>GTP</name>
        <dbReference type="ChEBI" id="CHEBI:37565"/>
        <label>2</label>
    </ligand>
</feature>
<feature type="binding site" evidence="1">
    <location>
        <begin position="295"/>
        <end position="298"/>
    </location>
    <ligand>
        <name>GTP</name>
        <dbReference type="ChEBI" id="CHEBI:37565"/>
        <label>2</label>
    </ligand>
</feature>
<keyword id="KW-0342">GTP-binding</keyword>
<keyword id="KW-0547">Nucleotide-binding</keyword>
<keyword id="KW-1185">Reference proteome</keyword>
<keyword id="KW-0677">Repeat</keyword>
<keyword id="KW-0690">Ribosome biogenesis</keyword>
<dbReference type="EMBL" id="CP000934">
    <property type="protein sequence ID" value="ACE86158.1"/>
    <property type="molecule type" value="Genomic_DNA"/>
</dbReference>
<dbReference type="RefSeq" id="WP_012487115.1">
    <property type="nucleotide sequence ID" value="NC_010995.1"/>
</dbReference>
<dbReference type="SMR" id="B3PDM5"/>
<dbReference type="STRING" id="498211.CJA_1485"/>
<dbReference type="KEGG" id="cja:CJA_1485"/>
<dbReference type="eggNOG" id="COG1160">
    <property type="taxonomic scope" value="Bacteria"/>
</dbReference>
<dbReference type="HOGENOM" id="CLU_016077_6_2_6"/>
<dbReference type="OrthoDB" id="9805918at2"/>
<dbReference type="Proteomes" id="UP000001036">
    <property type="component" value="Chromosome"/>
</dbReference>
<dbReference type="GO" id="GO:0005525">
    <property type="term" value="F:GTP binding"/>
    <property type="evidence" value="ECO:0007669"/>
    <property type="project" value="UniProtKB-UniRule"/>
</dbReference>
<dbReference type="GO" id="GO:0043022">
    <property type="term" value="F:ribosome binding"/>
    <property type="evidence" value="ECO:0007669"/>
    <property type="project" value="TreeGrafter"/>
</dbReference>
<dbReference type="GO" id="GO:0042254">
    <property type="term" value="P:ribosome biogenesis"/>
    <property type="evidence" value="ECO:0007669"/>
    <property type="project" value="UniProtKB-KW"/>
</dbReference>
<dbReference type="CDD" id="cd01894">
    <property type="entry name" value="EngA1"/>
    <property type="match status" value="1"/>
</dbReference>
<dbReference type="CDD" id="cd01895">
    <property type="entry name" value="EngA2"/>
    <property type="match status" value="1"/>
</dbReference>
<dbReference type="FunFam" id="3.30.300.20:FF:000004">
    <property type="entry name" value="GTPase Der"/>
    <property type="match status" value="1"/>
</dbReference>
<dbReference type="FunFam" id="3.40.50.300:FF:000040">
    <property type="entry name" value="GTPase Der"/>
    <property type="match status" value="1"/>
</dbReference>
<dbReference type="FunFam" id="3.40.50.300:FF:000057">
    <property type="entry name" value="GTPase Der"/>
    <property type="match status" value="1"/>
</dbReference>
<dbReference type="Gene3D" id="3.30.300.20">
    <property type="match status" value="1"/>
</dbReference>
<dbReference type="Gene3D" id="3.40.50.300">
    <property type="entry name" value="P-loop containing nucleotide triphosphate hydrolases"/>
    <property type="match status" value="2"/>
</dbReference>
<dbReference type="HAMAP" id="MF_00195">
    <property type="entry name" value="GTPase_Der"/>
    <property type="match status" value="1"/>
</dbReference>
<dbReference type="InterPro" id="IPR031166">
    <property type="entry name" value="G_ENGA"/>
</dbReference>
<dbReference type="InterPro" id="IPR006073">
    <property type="entry name" value="GTP-bd"/>
</dbReference>
<dbReference type="InterPro" id="IPR016484">
    <property type="entry name" value="GTPase_Der"/>
</dbReference>
<dbReference type="InterPro" id="IPR032859">
    <property type="entry name" value="KH_dom-like"/>
</dbReference>
<dbReference type="InterPro" id="IPR015946">
    <property type="entry name" value="KH_dom-like_a/b"/>
</dbReference>
<dbReference type="InterPro" id="IPR027417">
    <property type="entry name" value="P-loop_NTPase"/>
</dbReference>
<dbReference type="InterPro" id="IPR005225">
    <property type="entry name" value="Small_GTP-bd"/>
</dbReference>
<dbReference type="NCBIfam" id="TIGR03594">
    <property type="entry name" value="GTPase_EngA"/>
    <property type="match status" value="1"/>
</dbReference>
<dbReference type="NCBIfam" id="TIGR00231">
    <property type="entry name" value="small_GTP"/>
    <property type="match status" value="2"/>
</dbReference>
<dbReference type="PANTHER" id="PTHR43834">
    <property type="entry name" value="GTPASE DER"/>
    <property type="match status" value="1"/>
</dbReference>
<dbReference type="PANTHER" id="PTHR43834:SF6">
    <property type="entry name" value="GTPASE DER"/>
    <property type="match status" value="1"/>
</dbReference>
<dbReference type="Pfam" id="PF14714">
    <property type="entry name" value="KH_dom-like"/>
    <property type="match status" value="1"/>
</dbReference>
<dbReference type="Pfam" id="PF01926">
    <property type="entry name" value="MMR_HSR1"/>
    <property type="match status" value="2"/>
</dbReference>
<dbReference type="PIRSF" id="PIRSF006485">
    <property type="entry name" value="GTP-binding_EngA"/>
    <property type="match status" value="1"/>
</dbReference>
<dbReference type="PRINTS" id="PR00326">
    <property type="entry name" value="GTP1OBG"/>
</dbReference>
<dbReference type="SUPFAM" id="SSF52540">
    <property type="entry name" value="P-loop containing nucleoside triphosphate hydrolases"/>
    <property type="match status" value="2"/>
</dbReference>
<dbReference type="PROSITE" id="PS51712">
    <property type="entry name" value="G_ENGA"/>
    <property type="match status" value="2"/>
</dbReference>
<proteinExistence type="inferred from homology"/>
<comment type="function">
    <text evidence="1">GTPase that plays an essential role in the late steps of ribosome biogenesis.</text>
</comment>
<comment type="subunit">
    <text evidence="1">Associates with the 50S ribosomal subunit.</text>
</comment>
<comment type="similarity">
    <text evidence="1">Belongs to the TRAFAC class TrmE-Era-EngA-EngB-Septin-like GTPase superfamily. EngA (Der) GTPase family.</text>
</comment>
<gene>
    <name evidence="1" type="primary">der</name>
    <name type="synonym">engA</name>
    <name type="ordered locus">CJA_1485</name>
</gene>
<organism>
    <name type="scientific">Cellvibrio japonicus (strain Ueda107)</name>
    <name type="common">Pseudomonas fluorescens subsp. cellulosa</name>
    <dbReference type="NCBI Taxonomy" id="498211"/>
    <lineage>
        <taxon>Bacteria</taxon>
        <taxon>Pseudomonadati</taxon>
        <taxon>Pseudomonadota</taxon>
        <taxon>Gammaproteobacteria</taxon>
        <taxon>Cellvibrionales</taxon>
        <taxon>Cellvibrionaceae</taxon>
        <taxon>Cellvibrio</taxon>
    </lineage>
</organism>